<protein>
    <recommendedName>
        <fullName>Carbamate kinase</fullName>
        <ecNumber>2.7.2.2</ecNumber>
    </recommendedName>
</protein>
<organism>
    <name type="scientific">Clostridium perfringens (strain 13 / Type A)</name>
    <dbReference type="NCBI Taxonomy" id="195102"/>
    <lineage>
        <taxon>Bacteria</taxon>
        <taxon>Bacillati</taxon>
        <taxon>Bacillota</taxon>
        <taxon>Clostridia</taxon>
        <taxon>Eubacteriales</taxon>
        <taxon>Clostridiaceae</taxon>
        <taxon>Clostridium</taxon>
    </lineage>
</organism>
<sequence length="314" mass="33864">MKIVLALGGNALQKDSKDKSAEGQLETCRQTAISVADLIEDGHEVSIVHGNGPQVGQILASIELAHQVDNGNPLFPFDVVGAFSEGYIGYHLQNTIREELLKRGIEKSVDTITTQVIVDKNDPGFKNPTKPIGSFYTKEEAEKLEKDKGYTMKEDAGRGYRRVVASPKPVDIVEKEAIKTMVDSGFIVIACGGGGIPVVEDGDRLEGVPAVIDKDFAAEKLAEILDADALLILTAVDRVCVNFNKPDQKALKEINLEEVDKYIEEGQFAPGSMLPKVEACKKFVLSGDKKVAIIASLTNAKAALRGESGTKIVK</sequence>
<keyword id="KW-0056">Arginine metabolism</keyword>
<keyword id="KW-0067">ATP-binding</keyword>
<keyword id="KW-0963">Cytoplasm</keyword>
<keyword id="KW-0418">Kinase</keyword>
<keyword id="KW-0547">Nucleotide-binding</keyword>
<keyword id="KW-1185">Reference proteome</keyword>
<keyword id="KW-0808">Transferase</keyword>
<dbReference type="EC" id="2.7.2.2"/>
<dbReference type="EMBL" id="X97768">
    <property type="protein sequence ID" value="CAA66367.1"/>
    <property type="molecule type" value="Genomic_DNA"/>
</dbReference>
<dbReference type="EMBL" id="BA000016">
    <property type="protein sequence ID" value="BAB79877.1"/>
    <property type="molecule type" value="Genomic_DNA"/>
</dbReference>
<dbReference type="RefSeq" id="WP_003462795.1">
    <property type="nucleotide sequence ID" value="NC_003366.1"/>
</dbReference>
<dbReference type="SMR" id="Q46171"/>
<dbReference type="STRING" id="195102.gene:10489415"/>
<dbReference type="KEGG" id="cpe:CPE0171"/>
<dbReference type="HOGENOM" id="CLU_076278_0_0_9"/>
<dbReference type="UniPathway" id="UPA00996">
    <property type="reaction ID" value="UER00366"/>
</dbReference>
<dbReference type="Proteomes" id="UP000000818">
    <property type="component" value="Chromosome"/>
</dbReference>
<dbReference type="GO" id="GO:0005829">
    <property type="term" value="C:cytosol"/>
    <property type="evidence" value="ECO:0007669"/>
    <property type="project" value="TreeGrafter"/>
</dbReference>
<dbReference type="GO" id="GO:0005524">
    <property type="term" value="F:ATP binding"/>
    <property type="evidence" value="ECO:0007669"/>
    <property type="project" value="UniProtKB-KW"/>
</dbReference>
<dbReference type="GO" id="GO:0008804">
    <property type="term" value="F:carbamate kinase activity"/>
    <property type="evidence" value="ECO:0007669"/>
    <property type="project" value="UniProtKB-EC"/>
</dbReference>
<dbReference type="GO" id="GO:0019546">
    <property type="term" value="P:arginine deiminase pathway"/>
    <property type="evidence" value="ECO:0007669"/>
    <property type="project" value="TreeGrafter"/>
</dbReference>
<dbReference type="CDD" id="cd04235">
    <property type="entry name" value="AAK_CK"/>
    <property type="match status" value="1"/>
</dbReference>
<dbReference type="FunFam" id="3.40.1160.10:FF:000007">
    <property type="entry name" value="Carbamate kinase"/>
    <property type="match status" value="1"/>
</dbReference>
<dbReference type="Gene3D" id="3.40.1160.10">
    <property type="entry name" value="Acetylglutamate kinase-like"/>
    <property type="match status" value="1"/>
</dbReference>
<dbReference type="InterPro" id="IPR036393">
    <property type="entry name" value="AceGlu_kinase-like_sf"/>
</dbReference>
<dbReference type="InterPro" id="IPR001048">
    <property type="entry name" value="Asp/Glu/Uridylate_kinase"/>
</dbReference>
<dbReference type="InterPro" id="IPR003964">
    <property type="entry name" value="Carb_kinase"/>
</dbReference>
<dbReference type="NCBIfam" id="TIGR00746">
    <property type="entry name" value="arcC"/>
    <property type="match status" value="1"/>
</dbReference>
<dbReference type="NCBIfam" id="NF009007">
    <property type="entry name" value="PRK12352.1"/>
    <property type="match status" value="1"/>
</dbReference>
<dbReference type="PANTHER" id="PTHR30409">
    <property type="entry name" value="CARBAMATE KINASE"/>
    <property type="match status" value="1"/>
</dbReference>
<dbReference type="PANTHER" id="PTHR30409:SF1">
    <property type="entry name" value="CARBAMATE KINASE-RELATED"/>
    <property type="match status" value="1"/>
</dbReference>
<dbReference type="Pfam" id="PF00696">
    <property type="entry name" value="AA_kinase"/>
    <property type="match status" value="1"/>
</dbReference>
<dbReference type="PIRSF" id="PIRSF000723">
    <property type="entry name" value="Carbamate_kin"/>
    <property type="match status" value="1"/>
</dbReference>
<dbReference type="PRINTS" id="PR01469">
    <property type="entry name" value="CARBMTKINASE"/>
</dbReference>
<dbReference type="SUPFAM" id="SSF53633">
    <property type="entry name" value="Carbamate kinase-like"/>
    <property type="match status" value="1"/>
</dbReference>
<proteinExistence type="inferred from homology"/>
<gene>
    <name type="primary">arcC</name>
    <name type="ordered locus">CPE0171</name>
</gene>
<evidence type="ECO:0000250" key="1"/>
<evidence type="ECO:0000305" key="2"/>
<accession>Q46171</accession>
<feature type="chain" id="PRO_0000185118" description="Carbamate kinase">
    <location>
        <begin position="1"/>
        <end position="314"/>
    </location>
</feature>
<feature type="sequence conflict" description="In Ref. 1; CAA66367." evidence="2" ref="1">
    <original>G</original>
    <variation>E</variation>
    <location>
        <position position="9"/>
    </location>
</feature>
<feature type="sequence conflict" description="In Ref. 1; CAA66367." evidence="2" ref="1">
    <original>K</original>
    <variation>T</variation>
    <location>
        <position position="126"/>
    </location>
</feature>
<comment type="catalytic activity">
    <reaction>
        <text>hydrogencarbonate + NH4(+) + ATP = carbamoyl phosphate + ADP + H2O + H(+)</text>
        <dbReference type="Rhea" id="RHEA:10152"/>
        <dbReference type="ChEBI" id="CHEBI:15377"/>
        <dbReference type="ChEBI" id="CHEBI:15378"/>
        <dbReference type="ChEBI" id="CHEBI:17544"/>
        <dbReference type="ChEBI" id="CHEBI:28938"/>
        <dbReference type="ChEBI" id="CHEBI:30616"/>
        <dbReference type="ChEBI" id="CHEBI:58228"/>
        <dbReference type="ChEBI" id="CHEBI:456216"/>
        <dbReference type="EC" id="2.7.2.2"/>
    </reaction>
</comment>
<comment type="pathway">
    <text>Metabolic intermediate metabolism; carbamoyl phosphate degradation; CO(2) and NH(3) from carbamoyl phosphate: step 1/1.</text>
</comment>
<comment type="subunit">
    <text evidence="1">Homodimer.</text>
</comment>
<comment type="subcellular location">
    <subcellularLocation>
        <location evidence="2">Cytoplasm</location>
    </subcellularLocation>
</comment>
<comment type="similarity">
    <text evidence="2">Belongs to the carbamate kinase family.</text>
</comment>
<name>ARCC_CLOPE</name>
<reference key="1">
    <citation type="journal article" date="1997" name="FEMS Microbiol. Lett.">
        <title>Collagenase gene (colA) is located in the 3'-flanking region of the perfringolysin O (pfoA) locus in Clostridium perfringens.</title>
        <authorList>
            <person name="Ohtani K."/>
            <person name="Bando M."/>
            <person name="Swe T."/>
            <person name="Banu S."/>
            <person name="Oe M."/>
            <person name="Hayashi H."/>
            <person name="Shimizu T."/>
        </authorList>
    </citation>
    <scope>NUCLEOTIDE SEQUENCE [GENOMIC DNA]</scope>
    <source>
        <strain>13 / Type A</strain>
    </source>
</reference>
<reference key="2">
    <citation type="journal article" date="2002" name="Proc. Natl. Acad. Sci. U.S.A.">
        <title>Complete genome sequence of Clostridium perfringens, an anaerobic flesh-eater.</title>
        <authorList>
            <person name="Shimizu T."/>
            <person name="Ohtani K."/>
            <person name="Hirakawa H."/>
            <person name="Ohshima K."/>
            <person name="Yamashita A."/>
            <person name="Shiba T."/>
            <person name="Ogasawara N."/>
            <person name="Hattori M."/>
            <person name="Kuhara S."/>
            <person name="Hayashi H."/>
        </authorList>
    </citation>
    <scope>NUCLEOTIDE SEQUENCE [LARGE SCALE GENOMIC DNA]</scope>
    <source>
        <strain>13 / Type A</strain>
    </source>
</reference>